<comment type="function">
    <text evidence="6">Transduces signals from the phototaxis receptor sensory rhodopsin I (Sop1).</text>
</comment>
<comment type="subunit">
    <text evidence="6">Interacts with Sop1.</text>
</comment>
<comment type="subcellular location">
    <subcellularLocation>
        <location evidence="6">Cell membrane</location>
        <topology evidence="6">Multi-pass membrane protein</topology>
    </subcellularLocation>
</comment>
<comment type="induction">
    <text evidence="5">Expressed constitutively throughout the growth phases, both in presence and absence of white light.</text>
</comment>
<comment type="similarity">
    <text evidence="7">Belongs to the methyl-accepting chemotaxis (MCP) protein family.</text>
</comment>
<comment type="sequence caution" evidence="7">
    <conflict type="erroneous initiation">
        <sequence resource="EMBL-CDS" id="AAV47975"/>
    </conflict>
    <text>Truncated N-terminus.</text>
</comment>
<feature type="chain" id="PRO_0000428857" description="Sensory rhodopsin I transducer">
    <location>
        <begin position="1"/>
        <end position="528"/>
    </location>
</feature>
<feature type="transmembrane region" description="Helical" evidence="2">
    <location>
        <begin position="11"/>
        <end position="31"/>
    </location>
</feature>
<feature type="transmembrane region" description="Helical" evidence="2">
    <location>
        <begin position="35"/>
        <end position="55"/>
    </location>
</feature>
<feature type="domain" description="HAMP 1" evidence="3">
    <location>
        <begin position="55"/>
        <end position="107"/>
    </location>
</feature>
<feature type="domain" description="HAMP 2" evidence="3">
    <location>
        <begin position="142"/>
        <end position="195"/>
    </location>
</feature>
<feature type="domain" description="Methyl-accepting transducer" evidence="4">
    <location>
        <begin position="214"/>
        <end position="455"/>
    </location>
</feature>
<feature type="modified residue" description="Glutamate methyl ester (Glu)" evidence="1">
    <location>
        <position position="259"/>
    </location>
</feature>
<reference key="1">
    <citation type="journal article" date="2004" name="Genome Res.">
        <title>Genome sequence of Haloarcula marismortui: a halophilic archaeon from the Dead Sea.</title>
        <authorList>
            <person name="Baliga N.S."/>
            <person name="Bonneau R."/>
            <person name="Facciotti M.T."/>
            <person name="Pan M."/>
            <person name="Glusman G."/>
            <person name="Deutsch E.W."/>
            <person name="Shannon P."/>
            <person name="Chiu Y."/>
            <person name="Weng R.S."/>
            <person name="Gan R.R."/>
            <person name="Hung P."/>
            <person name="Date S.V."/>
            <person name="Marcotte E."/>
            <person name="Hood L."/>
            <person name="Ng W.V."/>
        </authorList>
    </citation>
    <scope>NUCLEOTIDE SEQUENCE [LARGE SCALE GENOMIC DNA]</scope>
    <source>
        <strain>ATCC 43049 / DSM 3752 / JCM 8966 / VKM B-1809</strain>
    </source>
</reference>
<reference key="2">
    <citation type="journal article" date="2010" name="J. Bacteriol.">
        <title>A novel six-rhodopsin system in a single archaeon.</title>
        <authorList>
            <person name="Fu H.Y."/>
            <person name="Lin Y.C."/>
            <person name="Chang Y.N."/>
            <person name="Tseng H."/>
            <person name="Huang C.C."/>
            <person name="Liu K.C."/>
            <person name="Huang C.S."/>
            <person name="Su C.W."/>
            <person name="Weng R.R."/>
            <person name="Lee Y.Y."/>
            <person name="Ng W.V."/>
            <person name="Yang C.S."/>
        </authorList>
    </citation>
    <scope>INDUCTION</scope>
    <scope>IDENTIFICATION</scope>
</reference>
<reference key="3">
    <citation type="journal article" date="2013" name="J. Photochem. Photobiol. B">
        <title>A transducer for microbial sensory rhodopsin that adopts GTG as a start codon is identified in Haloarcula marismortui.</title>
        <authorList>
            <person name="Fu H.Y."/>
            <person name="Lu Y.H."/>
            <person name="Yi H.P."/>
            <person name="Yang C.S."/>
        </authorList>
    </citation>
    <scope>SUBCELLULAR LOCATION</scope>
    <scope>FUNCTION</scope>
    <scope>INTERACTION WITH SOP1</scope>
</reference>
<keyword id="KW-1003">Cell membrane</keyword>
<keyword id="KW-0472">Membrane</keyword>
<keyword id="KW-0488">Methylation</keyword>
<keyword id="KW-1185">Reference proteome</keyword>
<keyword id="KW-0677">Repeat</keyword>
<keyword id="KW-0807">Transducer</keyword>
<keyword id="KW-0812">Transmembrane</keyword>
<keyword id="KW-1133">Transmembrane helix</keyword>
<accession>Q5UXM8</accession>
<evidence type="ECO:0000250" key="1"/>
<evidence type="ECO:0000255" key="2"/>
<evidence type="ECO:0000255" key="3">
    <source>
        <dbReference type="PROSITE-ProRule" id="PRU00102"/>
    </source>
</evidence>
<evidence type="ECO:0000255" key="4">
    <source>
        <dbReference type="PROSITE-ProRule" id="PRU00284"/>
    </source>
</evidence>
<evidence type="ECO:0000269" key="5">
    <source>
    </source>
</evidence>
<evidence type="ECO:0000269" key="6">
    <source>
    </source>
</evidence>
<evidence type="ECO:0000305" key="7"/>
<organism>
    <name type="scientific">Haloarcula marismortui (strain ATCC 43049 / DSM 3752 / JCM 8966 / VKM B-1809)</name>
    <name type="common">Halobacterium marismortui</name>
    <dbReference type="NCBI Taxonomy" id="272569"/>
    <lineage>
        <taxon>Archaea</taxon>
        <taxon>Methanobacteriati</taxon>
        <taxon>Methanobacteriota</taxon>
        <taxon>Stenosarchaea group</taxon>
        <taxon>Halobacteria</taxon>
        <taxon>Halobacteriales</taxon>
        <taxon>Haloarculaceae</taxon>
        <taxon>Haloarcula</taxon>
    </lineage>
</organism>
<protein>
    <recommendedName>
        <fullName>Sensory rhodopsin I transducer</fullName>
    </recommendedName>
    <alternativeName>
        <fullName>MCP domain signal transducer 1</fullName>
        <shortName>HmHtrI</shortName>
    </alternativeName>
</protein>
<gene>
    <name type="primary">htr1</name>
    <name type="ordered locus">rrnAC3281</name>
</gene>
<dbReference type="EMBL" id="AY596297">
    <property type="protein sequence ID" value="AAV47975.1"/>
    <property type="status" value="ALT_INIT"/>
    <property type="molecule type" value="Genomic_DNA"/>
</dbReference>
<dbReference type="RefSeq" id="WP_049939098.1">
    <property type="nucleotide sequence ID" value="NC_006396.1"/>
</dbReference>
<dbReference type="SMR" id="Q5UXM8"/>
<dbReference type="STRING" id="272569.rrnAC3281"/>
<dbReference type="PaxDb" id="272569-rrnAC3281"/>
<dbReference type="EnsemblBacteria" id="AAV47975">
    <property type="protein sequence ID" value="AAV47975"/>
    <property type="gene ID" value="rrnAC3281"/>
</dbReference>
<dbReference type="GeneID" id="40154077"/>
<dbReference type="KEGG" id="hma:rrnAC3281"/>
<dbReference type="PATRIC" id="fig|272569.17.peg.3812"/>
<dbReference type="eggNOG" id="arCOG06364">
    <property type="taxonomic scope" value="Archaea"/>
</dbReference>
<dbReference type="HOGENOM" id="CLU_000445_107_18_2"/>
<dbReference type="Proteomes" id="UP000001169">
    <property type="component" value="Chromosome I"/>
</dbReference>
<dbReference type="GO" id="GO:0005886">
    <property type="term" value="C:plasma membrane"/>
    <property type="evidence" value="ECO:0007669"/>
    <property type="project" value="UniProtKB-SubCell"/>
</dbReference>
<dbReference type="GO" id="GO:0004888">
    <property type="term" value="F:transmembrane signaling receptor activity"/>
    <property type="evidence" value="ECO:0007669"/>
    <property type="project" value="InterPro"/>
</dbReference>
<dbReference type="GO" id="GO:0006935">
    <property type="term" value="P:chemotaxis"/>
    <property type="evidence" value="ECO:0007669"/>
    <property type="project" value="InterPro"/>
</dbReference>
<dbReference type="GO" id="GO:0007165">
    <property type="term" value="P:signal transduction"/>
    <property type="evidence" value="ECO:0007669"/>
    <property type="project" value="UniProtKB-KW"/>
</dbReference>
<dbReference type="CDD" id="cd06225">
    <property type="entry name" value="HAMP"/>
    <property type="match status" value="2"/>
</dbReference>
<dbReference type="Gene3D" id="6.10.340.10">
    <property type="match status" value="2"/>
</dbReference>
<dbReference type="Gene3D" id="1.10.287.950">
    <property type="entry name" value="Methyl-accepting chemotaxis protein"/>
    <property type="match status" value="1"/>
</dbReference>
<dbReference type="InterPro" id="IPR004090">
    <property type="entry name" value="Chemotax_Me-accpt_rcpt"/>
</dbReference>
<dbReference type="InterPro" id="IPR003660">
    <property type="entry name" value="HAMP_dom"/>
</dbReference>
<dbReference type="InterPro" id="IPR004089">
    <property type="entry name" value="MCPsignal_dom"/>
</dbReference>
<dbReference type="PANTHER" id="PTHR32089:SF112">
    <property type="entry name" value="LYSOZYME-LIKE PROTEIN-RELATED"/>
    <property type="match status" value="1"/>
</dbReference>
<dbReference type="PANTHER" id="PTHR32089">
    <property type="entry name" value="METHYL-ACCEPTING CHEMOTAXIS PROTEIN MCPB"/>
    <property type="match status" value="1"/>
</dbReference>
<dbReference type="Pfam" id="PF00672">
    <property type="entry name" value="HAMP"/>
    <property type="match status" value="2"/>
</dbReference>
<dbReference type="Pfam" id="PF00015">
    <property type="entry name" value="MCPsignal"/>
    <property type="match status" value="1"/>
</dbReference>
<dbReference type="PRINTS" id="PR00260">
    <property type="entry name" value="CHEMTRNSDUCR"/>
</dbReference>
<dbReference type="SMART" id="SM00304">
    <property type="entry name" value="HAMP"/>
    <property type="match status" value="3"/>
</dbReference>
<dbReference type="SMART" id="SM00283">
    <property type="entry name" value="MA"/>
    <property type="match status" value="1"/>
</dbReference>
<dbReference type="SUPFAM" id="SSF158472">
    <property type="entry name" value="HAMP domain-like"/>
    <property type="match status" value="1"/>
</dbReference>
<dbReference type="SUPFAM" id="SSF58104">
    <property type="entry name" value="Methyl-accepting chemotaxis protein (MCP) signaling domain"/>
    <property type="match status" value="1"/>
</dbReference>
<dbReference type="PROSITE" id="PS50111">
    <property type="entry name" value="CHEMOTAXIS_TRANSDUC_2"/>
    <property type="match status" value="1"/>
</dbReference>
<dbReference type="PROSITE" id="PS50885">
    <property type="entry name" value="HAMP"/>
    <property type="match status" value="2"/>
</dbReference>
<proteinExistence type="evidence at protein level"/>
<sequence>MTISSVKQSYGAKLGVGYIATATLLITVGVVTQDVASTVVAGIAGLLTLGSINAAETVASITELSAQTQRVADGDLDIEIDSTRTDEFGDLADSIEQMRVSLRDRLSEMEAARADLEQAQTDANEAQAEAEAAEEEAKELATAYQDIATEYGTVMAAAADGDLTQRVDVATEYDAMETVGQSFNRMMDELQETIETVTAVSKRITTETDEITETSRRVQQEVDAAVETVADIQTQATDQQTKLESAAVDIQDVSASAEEIAATIDDLADRSSEVEEASSDARTASETALTEMDQIQADAADAVTQVETLQQRMAEITDIADIISEIAEQTNMLALNASIEAARAGGQGSGADGNGFSVVADEVKSLAEETQSRADEIATVIAEVSEQTEEVTDSIQATETRVETGTETVESALSEIATIAEAVDDISASIEEMRETTSEQADTVQATADSIADVTEASAETATTAEEMSTQIRRQRDVVKSISDSLDSFRETAVDDLESRVRLFTINTDTTAASQTRAVGSPSIGGDD</sequence>
<name>HTR1_HALMA</name>